<accession>A9M838</accession>
<evidence type="ECO:0000255" key="1">
    <source>
        <dbReference type="HAMAP-Rule" id="MF_00815"/>
    </source>
</evidence>
<dbReference type="EMBL" id="CP000872">
    <property type="protein sequence ID" value="ABX62836.1"/>
    <property type="molecule type" value="Genomic_DNA"/>
</dbReference>
<dbReference type="RefSeq" id="WP_006132906.1">
    <property type="nucleotide sequence ID" value="NC_010103.1"/>
</dbReference>
<dbReference type="SMR" id="A9M838"/>
<dbReference type="GeneID" id="55591398"/>
<dbReference type="KEGG" id="bcs:BCAN_A1838"/>
<dbReference type="HOGENOM" id="CLU_050669_0_1_5"/>
<dbReference type="PhylomeDB" id="A9M838"/>
<dbReference type="Proteomes" id="UP000001385">
    <property type="component" value="Chromosome I"/>
</dbReference>
<dbReference type="GO" id="GO:0005886">
    <property type="term" value="C:plasma membrane"/>
    <property type="evidence" value="ECO:0007669"/>
    <property type="project" value="UniProtKB-SubCell"/>
</dbReference>
<dbReference type="GO" id="GO:0045259">
    <property type="term" value="C:proton-transporting ATP synthase complex"/>
    <property type="evidence" value="ECO:0007669"/>
    <property type="project" value="UniProtKB-KW"/>
</dbReference>
<dbReference type="GO" id="GO:0005524">
    <property type="term" value="F:ATP binding"/>
    <property type="evidence" value="ECO:0007669"/>
    <property type="project" value="UniProtKB-UniRule"/>
</dbReference>
<dbReference type="GO" id="GO:0046933">
    <property type="term" value="F:proton-transporting ATP synthase activity, rotational mechanism"/>
    <property type="evidence" value="ECO:0007669"/>
    <property type="project" value="UniProtKB-UniRule"/>
</dbReference>
<dbReference type="GO" id="GO:0042777">
    <property type="term" value="P:proton motive force-driven plasma membrane ATP synthesis"/>
    <property type="evidence" value="ECO:0007669"/>
    <property type="project" value="UniProtKB-UniRule"/>
</dbReference>
<dbReference type="CDD" id="cd12151">
    <property type="entry name" value="F1-ATPase_gamma"/>
    <property type="match status" value="1"/>
</dbReference>
<dbReference type="FunFam" id="1.10.287.80:FF:000001">
    <property type="entry name" value="ATP synthase gamma chain"/>
    <property type="match status" value="1"/>
</dbReference>
<dbReference type="FunFam" id="1.10.287.80:FF:000003">
    <property type="entry name" value="ATP synthase gamma chain, chloroplastic"/>
    <property type="match status" value="1"/>
</dbReference>
<dbReference type="Gene3D" id="3.40.1380.10">
    <property type="match status" value="1"/>
</dbReference>
<dbReference type="Gene3D" id="1.10.287.80">
    <property type="entry name" value="ATP synthase, gamma subunit, helix hairpin domain"/>
    <property type="match status" value="1"/>
</dbReference>
<dbReference type="HAMAP" id="MF_00815">
    <property type="entry name" value="ATP_synth_gamma_bact"/>
    <property type="match status" value="1"/>
</dbReference>
<dbReference type="InterPro" id="IPR035968">
    <property type="entry name" value="ATP_synth_F1_ATPase_gsu"/>
</dbReference>
<dbReference type="InterPro" id="IPR000131">
    <property type="entry name" value="ATP_synth_F1_gsu"/>
</dbReference>
<dbReference type="InterPro" id="IPR023632">
    <property type="entry name" value="ATP_synth_F1_gsu_CS"/>
</dbReference>
<dbReference type="NCBIfam" id="TIGR01146">
    <property type="entry name" value="ATPsyn_F1gamma"/>
    <property type="match status" value="1"/>
</dbReference>
<dbReference type="NCBIfam" id="NF004146">
    <property type="entry name" value="PRK05621.1-4"/>
    <property type="match status" value="1"/>
</dbReference>
<dbReference type="PANTHER" id="PTHR11693">
    <property type="entry name" value="ATP SYNTHASE GAMMA CHAIN"/>
    <property type="match status" value="1"/>
</dbReference>
<dbReference type="PANTHER" id="PTHR11693:SF22">
    <property type="entry name" value="ATP SYNTHASE SUBUNIT GAMMA, MITOCHONDRIAL"/>
    <property type="match status" value="1"/>
</dbReference>
<dbReference type="Pfam" id="PF00231">
    <property type="entry name" value="ATP-synt"/>
    <property type="match status" value="1"/>
</dbReference>
<dbReference type="PIRSF" id="PIRSF039089">
    <property type="entry name" value="ATP_synthase_gamma"/>
    <property type="match status" value="1"/>
</dbReference>
<dbReference type="PRINTS" id="PR00126">
    <property type="entry name" value="ATPASEGAMMA"/>
</dbReference>
<dbReference type="SUPFAM" id="SSF52943">
    <property type="entry name" value="ATP synthase (F1-ATPase), gamma subunit"/>
    <property type="match status" value="1"/>
</dbReference>
<dbReference type="PROSITE" id="PS00153">
    <property type="entry name" value="ATPASE_GAMMA"/>
    <property type="match status" value="1"/>
</dbReference>
<name>ATPG_BRUC2</name>
<feature type="chain" id="PRO_1000083774" description="ATP synthase gamma chain">
    <location>
        <begin position="1"/>
        <end position="292"/>
    </location>
</feature>
<sequence length="292" mass="31812">MPSLKDLRNRIASVKATQKITKAMQMVAAAKLRRAQEAAEAARPYSQRMGAVLANIAQNVSGEDAPALMVGTGKDNVHLLVVCTAERGLCGGFNSQIARLARDHARKLLAEGKTVKIITVGKKGADILRREFSALLHDHVDLREVKQLAFVHADQIGHKIIKLFEEGAFDVCTLFYSEFKSVISQVPTAQQLIPASADNEAEMETAGDAIYEYEPDPAAILSTLIPRNISVQIFRALLENVAGEMGAKMSAMDNATRNAGDMINKLSITYNRQRQAQITKELIEIISGAEAL</sequence>
<keyword id="KW-0066">ATP synthesis</keyword>
<keyword id="KW-0997">Cell inner membrane</keyword>
<keyword id="KW-1003">Cell membrane</keyword>
<keyword id="KW-0139">CF(1)</keyword>
<keyword id="KW-0375">Hydrogen ion transport</keyword>
<keyword id="KW-0406">Ion transport</keyword>
<keyword id="KW-0472">Membrane</keyword>
<keyword id="KW-1185">Reference proteome</keyword>
<keyword id="KW-0813">Transport</keyword>
<gene>
    <name evidence="1" type="primary">atpG</name>
    <name type="ordered locus">BCAN_A1838</name>
</gene>
<proteinExistence type="inferred from homology"/>
<protein>
    <recommendedName>
        <fullName evidence="1">ATP synthase gamma chain</fullName>
    </recommendedName>
    <alternativeName>
        <fullName evidence="1">ATP synthase F1 sector gamma subunit</fullName>
    </alternativeName>
    <alternativeName>
        <fullName evidence="1">F-ATPase gamma subunit</fullName>
    </alternativeName>
</protein>
<reference key="1">
    <citation type="submission" date="2007-10" db="EMBL/GenBank/DDBJ databases">
        <title>Brucella canis ATCC 23365 whole genome shotgun sequencing project.</title>
        <authorList>
            <person name="Setubal J.C."/>
            <person name="Bowns C."/>
            <person name="Boyle S."/>
            <person name="Crasta O.R."/>
            <person name="Czar M.J."/>
            <person name="Dharmanolla C."/>
            <person name="Gillespie J.J."/>
            <person name="Kenyon R.W."/>
            <person name="Lu J."/>
            <person name="Mane S."/>
            <person name="Mohapatra S."/>
            <person name="Nagrani S."/>
            <person name="Purkayastha A."/>
            <person name="Rajasimha H.K."/>
            <person name="Shallom J.M."/>
            <person name="Shallom S."/>
            <person name="Shukla M."/>
            <person name="Snyder E.E."/>
            <person name="Sobral B.W."/>
            <person name="Wattam A.R."/>
            <person name="Will R."/>
            <person name="Williams K."/>
            <person name="Yoo H."/>
            <person name="Bruce D."/>
            <person name="Detter C."/>
            <person name="Munk C."/>
            <person name="Brettin T.S."/>
        </authorList>
    </citation>
    <scope>NUCLEOTIDE SEQUENCE [LARGE SCALE GENOMIC DNA]</scope>
    <source>
        <strain>ATCC 23365 / NCTC 10854 / RM-666</strain>
    </source>
</reference>
<comment type="function">
    <text evidence="1">Produces ATP from ADP in the presence of a proton gradient across the membrane. The gamma chain is believed to be important in regulating ATPase activity and the flow of protons through the CF(0) complex.</text>
</comment>
<comment type="subunit">
    <text evidence="1">F-type ATPases have 2 components, CF(1) - the catalytic core - and CF(0) - the membrane proton channel. CF(1) has five subunits: alpha(3), beta(3), gamma(1), delta(1), epsilon(1). CF(0) has three main subunits: a, b and c.</text>
</comment>
<comment type="subcellular location">
    <subcellularLocation>
        <location evidence="1">Cell inner membrane</location>
        <topology evidence="1">Peripheral membrane protein</topology>
    </subcellularLocation>
</comment>
<comment type="similarity">
    <text evidence="1">Belongs to the ATPase gamma chain family.</text>
</comment>
<organism>
    <name type="scientific">Brucella canis (strain ATCC 23365 / NCTC 10854 / RM-666)</name>
    <dbReference type="NCBI Taxonomy" id="483179"/>
    <lineage>
        <taxon>Bacteria</taxon>
        <taxon>Pseudomonadati</taxon>
        <taxon>Pseudomonadota</taxon>
        <taxon>Alphaproteobacteria</taxon>
        <taxon>Hyphomicrobiales</taxon>
        <taxon>Brucellaceae</taxon>
        <taxon>Brucella/Ochrobactrum group</taxon>
        <taxon>Brucella</taxon>
    </lineage>
</organism>